<reference key="1">
    <citation type="journal article" date="1998" name="Microbiology">
        <title>Bacillus subtilis genes for the utilization of sulfur from aliphatic sulfonates.</title>
        <authorList>
            <person name="van der Ploeg J.R."/>
            <person name="Cummings N.J."/>
            <person name="Leisinger T."/>
            <person name="Connerton I.F."/>
        </authorList>
    </citation>
    <scope>NUCLEOTIDE SEQUENCE [GENOMIC DNA]</scope>
    <source>
        <strain>168</strain>
    </source>
</reference>
<reference key="2">
    <citation type="journal article" date="1997" name="Nature">
        <title>The complete genome sequence of the Gram-positive bacterium Bacillus subtilis.</title>
        <authorList>
            <person name="Kunst F."/>
            <person name="Ogasawara N."/>
            <person name="Moszer I."/>
            <person name="Albertini A.M."/>
            <person name="Alloni G."/>
            <person name="Azevedo V."/>
            <person name="Bertero M.G."/>
            <person name="Bessieres P."/>
            <person name="Bolotin A."/>
            <person name="Borchert S."/>
            <person name="Borriss R."/>
            <person name="Boursier L."/>
            <person name="Brans A."/>
            <person name="Braun M."/>
            <person name="Brignell S.C."/>
            <person name="Bron S."/>
            <person name="Brouillet S."/>
            <person name="Bruschi C.V."/>
            <person name="Caldwell B."/>
            <person name="Capuano V."/>
            <person name="Carter N.M."/>
            <person name="Choi S.-K."/>
            <person name="Codani J.-J."/>
            <person name="Connerton I.F."/>
            <person name="Cummings N.J."/>
            <person name="Daniel R.A."/>
            <person name="Denizot F."/>
            <person name="Devine K.M."/>
            <person name="Duesterhoeft A."/>
            <person name="Ehrlich S.D."/>
            <person name="Emmerson P.T."/>
            <person name="Entian K.-D."/>
            <person name="Errington J."/>
            <person name="Fabret C."/>
            <person name="Ferrari E."/>
            <person name="Foulger D."/>
            <person name="Fritz C."/>
            <person name="Fujita M."/>
            <person name="Fujita Y."/>
            <person name="Fuma S."/>
            <person name="Galizzi A."/>
            <person name="Galleron N."/>
            <person name="Ghim S.-Y."/>
            <person name="Glaser P."/>
            <person name="Goffeau A."/>
            <person name="Golightly E.J."/>
            <person name="Grandi G."/>
            <person name="Guiseppi G."/>
            <person name="Guy B.J."/>
            <person name="Haga K."/>
            <person name="Haiech J."/>
            <person name="Harwood C.R."/>
            <person name="Henaut A."/>
            <person name="Hilbert H."/>
            <person name="Holsappel S."/>
            <person name="Hosono S."/>
            <person name="Hullo M.-F."/>
            <person name="Itaya M."/>
            <person name="Jones L.-M."/>
            <person name="Joris B."/>
            <person name="Karamata D."/>
            <person name="Kasahara Y."/>
            <person name="Klaerr-Blanchard M."/>
            <person name="Klein C."/>
            <person name="Kobayashi Y."/>
            <person name="Koetter P."/>
            <person name="Koningstein G."/>
            <person name="Krogh S."/>
            <person name="Kumano M."/>
            <person name="Kurita K."/>
            <person name="Lapidus A."/>
            <person name="Lardinois S."/>
            <person name="Lauber J."/>
            <person name="Lazarevic V."/>
            <person name="Lee S.-M."/>
            <person name="Levine A."/>
            <person name="Liu H."/>
            <person name="Masuda S."/>
            <person name="Mauel C."/>
            <person name="Medigue C."/>
            <person name="Medina N."/>
            <person name="Mellado R.P."/>
            <person name="Mizuno M."/>
            <person name="Moestl D."/>
            <person name="Nakai S."/>
            <person name="Noback M."/>
            <person name="Noone D."/>
            <person name="O'Reilly M."/>
            <person name="Ogawa K."/>
            <person name="Ogiwara A."/>
            <person name="Oudega B."/>
            <person name="Park S.-H."/>
            <person name="Parro V."/>
            <person name="Pohl T.M."/>
            <person name="Portetelle D."/>
            <person name="Porwollik S."/>
            <person name="Prescott A.M."/>
            <person name="Presecan E."/>
            <person name="Pujic P."/>
            <person name="Purnelle B."/>
            <person name="Rapoport G."/>
            <person name="Rey M."/>
            <person name="Reynolds S."/>
            <person name="Rieger M."/>
            <person name="Rivolta C."/>
            <person name="Rocha E."/>
            <person name="Roche B."/>
            <person name="Rose M."/>
            <person name="Sadaie Y."/>
            <person name="Sato T."/>
            <person name="Scanlan E."/>
            <person name="Schleich S."/>
            <person name="Schroeter R."/>
            <person name="Scoffone F."/>
            <person name="Sekiguchi J."/>
            <person name="Sekowska A."/>
            <person name="Seror S.J."/>
            <person name="Serror P."/>
            <person name="Shin B.-S."/>
            <person name="Soldo B."/>
            <person name="Sorokin A."/>
            <person name="Tacconi E."/>
            <person name="Takagi T."/>
            <person name="Takahashi H."/>
            <person name="Takemaru K."/>
            <person name="Takeuchi M."/>
            <person name="Tamakoshi A."/>
            <person name="Tanaka T."/>
            <person name="Terpstra P."/>
            <person name="Tognoni A."/>
            <person name="Tosato V."/>
            <person name="Uchiyama S."/>
            <person name="Vandenbol M."/>
            <person name="Vannier F."/>
            <person name="Vassarotti A."/>
            <person name="Viari A."/>
            <person name="Wambutt R."/>
            <person name="Wedler E."/>
            <person name="Wedler H."/>
            <person name="Weitzenegger T."/>
            <person name="Winters P."/>
            <person name="Wipat A."/>
            <person name="Yamamoto H."/>
            <person name="Yamane K."/>
            <person name="Yasumoto K."/>
            <person name="Yata K."/>
            <person name="Yoshida K."/>
            <person name="Yoshikawa H.-F."/>
            <person name="Zumstein E."/>
            <person name="Yoshikawa H."/>
            <person name="Danchin A."/>
        </authorList>
    </citation>
    <scope>NUCLEOTIDE SEQUENCE [LARGE SCALE GENOMIC DNA]</scope>
    <source>
        <strain>168</strain>
    </source>
</reference>
<reference key="3">
    <citation type="journal article" date="1994" name="Biochim. Biophys. Acta">
        <title>Isolation of Tn917 insertional mutants of Bacillus subtilis that are resistant to the protonophore carbonyl cyanide m-chlorophenylhydrazone.</title>
        <authorList>
            <person name="Quirk P.G."/>
            <person name="Guffanti A.A."/>
            <person name="Clejan S."/>
            <person name="Cheng J."/>
            <person name="Krulwich T.A."/>
        </authorList>
    </citation>
    <scope>NUCLEOTIDE SEQUENCE [GENOMIC DNA] OF 1-372</scope>
    <source>
        <strain>BD99 / MS11</strain>
    </source>
</reference>
<accession>P40402</accession>
<gene>
    <name type="primary">ssuD</name>
    <name type="synonym">ygcA</name>
    <name type="synonym">yzeC</name>
    <name type="ordered locus">BSU08860</name>
</gene>
<comment type="function">
    <text evidence="1">Catalyzes the desulfonation of aliphatic sulfonates.</text>
</comment>
<comment type="catalytic activity">
    <reaction>
        <text>an alkanesulfonate + FMNH2 + O2 = an aldehyde + FMN + sulfite + H2O + 2 H(+)</text>
        <dbReference type="Rhea" id="RHEA:23064"/>
        <dbReference type="ChEBI" id="CHEBI:15377"/>
        <dbReference type="ChEBI" id="CHEBI:15378"/>
        <dbReference type="ChEBI" id="CHEBI:15379"/>
        <dbReference type="ChEBI" id="CHEBI:17359"/>
        <dbReference type="ChEBI" id="CHEBI:17478"/>
        <dbReference type="ChEBI" id="CHEBI:57618"/>
        <dbReference type="ChEBI" id="CHEBI:58210"/>
        <dbReference type="ChEBI" id="CHEBI:134249"/>
        <dbReference type="EC" id="1.14.14.5"/>
    </reaction>
</comment>
<comment type="induction">
    <text>Repressed by sulfate or cysteine.</text>
</comment>
<comment type="similarity">
    <text evidence="2">Belongs to the SsuD family.</text>
</comment>
<comment type="sequence caution" evidence="2">
    <conflict type="erroneous initiation">
        <sequence resource="EMBL-CDS" id="CAB07523"/>
    </conflict>
</comment>
<keyword id="KW-0285">Flavoprotein</keyword>
<keyword id="KW-0288">FMN</keyword>
<keyword id="KW-0503">Monooxygenase</keyword>
<keyword id="KW-0560">Oxidoreductase</keyword>
<keyword id="KW-1185">Reference proteome</keyword>
<organism>
    <name type="scientific">Bacillus subtilis (strain 168)</name>
    <dbReference type="NCBI Taxonomy" id="224308"/>
    <lineage>
        <taxon>Bacteria</taxon>
        <taxon>Bacillati</taxon>
        <taxon>Bacillota</taxon>
        <taxon>Bacilli</taxon>
        <taxon>Bacillales</taxon>
        <taxon>Bacillaceae</taxon>
        <taxon>Bacillus</taxon>
    </lineage>
</organism>
<protein>
    <recommendedName>
        <fullName>Alkanesulfonate monooxygenase</fullName>
        <ecNumber>1.14.14.5</ecNumber>
    </recommendedName>
    <alternativeName>
        <fullName>FMNH2-dependent aliphatic sulfonate monooxygenase</fullName>
    </alternativeName>
</protein>
<feature type="chain" id="PRO_0000216703" description="Alkanesulfonate monooxygenase">
    <location>
        <begin position="1"/>
        <end position="376"/>
    </location>
</feature>
<name>SSUD_BACSU</name>
<evidence type="ECO:0000250" key="1"/>
<evidence type="ECO:0000305" key="2"/>
<proteinExistence type="evidence at transcript level"/>
<sequence>MEILWFIPTHGDARYLGSESDGRTADHLYFKQVAQAADRLGYTGVLLPTGRSCEDPWLTASALAGETKDLKFLVAVRPGLMQPSLAARMTSTLDRISDGRLLINVVAGGDPYELAGDGLFISHDERYEATDEFLTVWRRLLQGETVSYEGKHIKVENSNLLFPPQQEPHPPIYFGGSSQAGIEAAAKHTDVYLTWGEPPEQVKEKIERVKKQAAKEGRSVRFGIRLHVIARETEQEAWEAAERLISHLDDDTIAKAQAALSRYDSSGQQRMAVLHQGDRTKLEISPNLWAGIGLVRGGAGTALVGDPQTIADRIAEYQALGIESFIFSGYPHLEEAYYFAELVFPLLPFENDRTRKLQNKRGEAVGNTYFVKEKNA</sequence>
<dbReference type="EC" id="1.14.14.5"/>
<dbReference type="EMBL" id="Z93102">
    <property type="protein sequence ID" value="CAB07523.1"/>
    <property type="status" value="ALT_INIT"/>
    <property type="molecule type" value="Genomic_DNA"/>
</dbReference>
<dbReference type="EMBL" id="AL009126">
    <property type="protein sequence ID" value="CAB12714.2"/>
    <property type="molecule type" value="Genomic_DNA"/>
</dbReference>
<dbReference type="EMBL" id="L16808">
    <property type="protein sequence ID" value="AAA64350.1"/>
    <property type="molecule type" value="Genomic_DNA"/>
</dbReference>
<dbReference type="PIR" id="D69817">
    <property type="entry name" value="D69817"/>
</dbReference>
<dbReference type="RefSeq" id="NP_388766.2">
    <property type="nucleotide sequence ID" value="NC_000964.3"/>
</dbReference>
<dbReference type="RefSeq" id="WP_003245787.1">
    <property type="nucleotide sequence ID" value="NZ_OZ025638.1"/>
</dbReference>
<dbReference type="SMR" id="P40402"/>
<dbReference type="FunCoup" id="P40402">
    <property type="interactions" value="179"/>
</dbReference>
<dbReference type="STRING" id="224308.BSU08860"/>
<dbReference type="jPOST" id="P40402"/>
<dbReference type="PaxDb" id="224308-BSU08860"/>
<dbReference type="EnsemblBacteria" id="CAB12714">
    <property type="protein sequence ID" value="CAB12714"/>
    <property type="gene ID" value="BSU_08860"/>
</dbReference>
<dbReference type="GeneID" id="939733"/>
<dbReference type="KEGG" id="bsu:BSU08860"/>
<dbReference type="PATRIC" id="fig|224308.179.peg.956"/>
<dbReference type="eggNOG" id="COG2141">
    <property type="taxonomic scope" value="Bacteria"/>
</dbReference>
<dbReference type="InParanoid" id="P40402"/>
<dbReference type="OrthoDB" id="9814695at2"/>
<dbReference type="PhylomeDB" id="P40402"/>
<dbReference type="BioCyc" id="BSUB:BSU08860-MONOMER"/>
<dbReference type="Proteomes" id="UP000001570">
    <property type="component" value="Chromosome"/>
</dbReference>
<dbReference type="GO" id="GO:0008726">
    <property type="term" value="F:alkanesulfonate monooxygenase activity"/>
    <property type="evidence" value="ECO:0000318"/>
    <property type="project" value="GO_Central"/>
</dbReference>
<dbReference type="GO" id="GO:0046306">
    <property type="term" value="P:alkanesulfonate catabolic process"/>
    <property type="evidence" value="ECO:0000318"/>
    <property type="project" value="GO_Central"/>
</dbReference>
<dbReference type="CDD" id="cd01094">
    <property type="entry name" value="Alkanesulfonate_monoxygenase"/>
    <property type="match status" value="1"/>
</dbReference>
<dbReference type="FunFam" id="3.20.20.30:FF:000001">
    <property type="entry name" value="Alkanesulfonate monooxygenase"/>
    <property type="match status" value="1"/>
</dbReference>
<dbReference type="Gene3D" id="3.20.20.30">
    <property type="entry name" value="Luciferase-like domain"/>
    <property type="match status" value="1"/>
</dbReference>
<dbReference type="HAMAP" id="MF_01229">
    <property type="entry name" value="Alkanesulf_monooxygen"/>
    <property type="match status" value="1"/>
</dbReference>
<dbReference type="InterPro" id="IPR019911">
    <property type="entry name" value="Alkanesulphonate_mOase_FMN-dep"/>
</dbReference>
<dbReference type="InterPro" id="IPR011251">
    <property type="entry name" value="Luciferase-like_dom"/>
</dbReference>
<dbReference type="InterPro" id="IPR036661">
    <property type="entry name" value="Luciferase-like_sf"/>
</dbReference>
<dbReference type="InterPro" id="IPR050172">
    <property type="entry name" value="SsuD_RutA_monooxygenase"/>
</dbReference>
<dbReference type="NCBIfam" id="TIGR03565">
    <property type="entry name" value="alk_sulf_monoox"/>
    <property type="match status" value="1"/>
</dbReference>
<dbReference type="NCBIfam" id="NF001939">
    <property type="entry name" value="PRK00719.1"/>
    <property type="match status" value="1"/>
</dbReference>
<dbReference type="PANTHER" id="PTHR42847">
    <property type="entry name" value="ALKANESULFONATE MONOOXYGENASE"/>
    <property type="match status" value="1"/>
</dbReference>
<dbReference type="PANTHER" id="PTHR42847:SF4">
    <property type="entry name" value="ALKANESULFONATE MONOOXYGENASE-RELATED"/>
    <property type="match status" value="1"/>
</dbReference>
<dbReference type="Pfam" id="PF00296">
    <property type="entry name" value="Bac_luciferase"/>
    <property type="match status" value="1"/>
</dbReference>
<dbReference type="SUPFAM" id="SSF51679">
    <property type="entry name" value="Bacterial luciferase-like"/>
    <property type="match status" value="1"/>
</dbReference>